<sequence length="210" mass="23001">MKNKLDLSLYLVATKGSKSEECFLNTLENAIKGGVSIIQLREKELNAREFYKLGLKVQKLCKSYKIPFLINDRVDIALALDADGVHLGQEDLEAKLARKLLGDEKIIGLSLKKLEQLEFIQGVNYLGCGAIKATPTKESSLLSLELLSQICDKSPIGVVAIGGIDKEALVELKGINLSGVAVVRAIMDAKDAFLAAKELKRKIYENLSLK</sequence>
<feature type="chain" id="PRO_0000157000" description="Thiamine-phosphate synthase">
    <location>
        <begin position="1"/>
        <end position="210"/>
    </location>
</feature>
<feature type="binding site" evidence="1">
    <location>
        <begin position="39"/>
        <end position="43"/>
    </location>
    <ligand>
        <name>4-amino-2-methyl-5-(diphosphooxymethyl)pyrimidine</name>
        <dbReference type="ChEBI" id="CHEBI:57841"/>
    </ligand>
</feature>
<feature type="binding site" evidence="1">
    <location>
        <position position="71"/>
    </location>
    <ligand>
        <name>4-amino-2-methyl-5-(diphosphooxymethyl)pyrimidine</name>
        <dbReference type="ChEBI" id="CHEBI:57841"/>
    </ligand>
</feature>
<feature type="binding site" evidence="1">
    <location>
        <position position="72"/>
    </location>
    <ligand>
        <name>Mg(2+)</name>
        <dbReference type="ChEBI" id="CHEBI:18420"/>
    </ligand>
</feature>
<feature type="binding site" evidence="1">
    <location>
        <position position="91"/>
    </location>
    <ligand>
        <name>Mg(2+)</name>
        <dbReference type="ChEBI" id="CHEBI:18420"/>
    </ligand>
</feature>
<feature type="binding site" evidence="1">
    <location>
        <position position="110"/>
    </location>
    <ligand>
        <name>4-amino-2-methyl-5-(diphosphooxymethyl)pyrimidine</name>
        <dbReference type="ChEBI" id="CHEBI:57841"/>
    </ligand>
</feature>
<feature type="binding site" evidence="1">
    <location>
        <begin position="134"/>
        <end position="136"/>
    </location>
    <ligand>
        <name>2-[(2R,5Z)-2-carboxy-4-methylthiazol-5(2H)-ylidene]ethyl phosphate</name>
        <dbReference type="ChEBI" id="CHEBI:62899"/>
    </ligand>
</feature>
<feature type="binding site" evidence="1">
    <location>
        <position position="137"/>
    </location>
    <ligand>
        <name>4-amino-2-methyl-5-(diphosphooxymethyl)pyrimidine</name>
        <dbReference type="ChEBI" id="CHEBI:57841"/>
    </ligand>
</feature>
<feature type="binding site" evidence="1">
    <location>
        <position position="163"/>
    </location>
    <ligand>
        <name>2-[(2R,5Z)-2-carboxy-4-methylthiazol-5(2H)-ylidene]ethyl phosphate</name>
        <dbReference type="ChEBI" id="CHEBI:62899"/>
    </ligand>
</feature>
<protein>
    <recommendedName>
        <fullName evidence="1">Thiamine-phosphate synthase</fullName>
        <shortName evidence="1">TP synthase</shortName>
        <shortName evidence="1">TPS</shortName>
        <ecNumber evidence="1">2.5.1.3</ecNumber>
    </recommendedName>
    <alternativeName>
        <fullName evidence="1">Thiamine-phosphate pyrophosphorylase</fullName>
        <shortName evidence="1">TMP pyrophosphorylase</shortName>
        <shortName evidence="1">TMP-PPase</shortName>
    </alternativeName>
</protein>
<reference key="1">
    <citation type="journal article" date="2000" name="Nature">
        <title>The genome sequence of the food-borne pathogen Campylobacter jejuni reveals hypervariable sequences.</title>
        <authorList>
            <person name="Parkhill J."/>
            <person name="Wren B.W."/>
            <person name="Mungall K.L."/>
            <person name="Ketley J.M."/>
            <person name="Churcher C.M."/>
            <person name="Basham D."/>
            <person name="Chillingworth T."/>
            <person name="Davies R.M."/>
            <person name="Feltwell T."/>
            <person name="Holroyd S."/>
            <person name="Jagels K."/>
            <person name="Karlyshev A.V."/>
            <person name="Moule S."/>
            <person name="Pallen M.J."/>
            <person name="Penn C.W."/>
            <person name="Quail M.A."/>
            <person name="Rajandream M.A."/>
            <person name="Rutherford K.M."/>
            <person name="van Vliet A.H.M."/>
            <person name="Whitehead S."/>
            <person name="Barrell B.G."/>
        </authorList>
    </citation>
    <scope>NUCLEOTIDE SEQUENCE [LARGE SCALE GENOMIC DNA]</scope>
    <source>
        <strain>ATCC 700819 / NCTC 11168</strain>
    </source>
</reference>
<evidence type="ECO:0000255" key="1">
    <source>
        <dbReference type="HAMAP-Rule" id="MF_00097"/>
    </source>
</evidence>
<organism>
    <name type="scientific">Campylobacter jejuni subsp. jejuni serotype O:2 (strain ATCC 700819 / NCTC 11168)</name>
    <dbReference type="NCBI Taxonomy" id="192222"/>
    <lineage>
        <taxon>Bacteria</taxon>
        <taxon>Pseudomonadati</taxon>
        <taxon>Campylobacterota</taxon>
        <taxon>Epsilonproteobacteria</taxon>
        <taxon>Campylobacterales</taxon>
        <taxon>Campylobacteraceae</taxon>
        <taxon>Campylobacter</taxon>
    </lineage>
</organism>
<accession>Q9PNL3</accession>
<accession>Q0P9H3</accession>
<gene>
    <name evidence="1" type="primary">thiE</name>
    <name type="ordered locus">Cj1081c</name>
</gene>
<keyword id="KW-0460">Magnesium</keyword>
<keyword id="KW-0479">Metal-binding</keyword>
<keyword id="KW-1185">Reference proteome</keyword>
<keyword id="KW-0784">Thiamine biosynthesis</keyword>
<keyword id="KW-0808">Transferase</keyword>
<name>THIE_CAMJE</name>
<proteinExistence type="inferred from homology"/>
<comment type="function">
    <text evidence="1">Condenses 4-methyl-5-(beta-hydroxyethyl)thiazole monophosphate (THZ-P) and 2-methyl-4-amino-5-hydroxymethyl pyrimidine pyrophosphate (HMP-PP) to form thiamine monophosphate (TMP).</text>
</comment>
<comment type="catalytic activity">
    <reaction evidence="1">
        <text>2-[(2R,5Z)-2-carboxy-4-methylthiazol-5(2H)-ylidene]ethyl phosphate + 4-amino-2-methyl-5-(diphosphooxymethyl)pyrimidine + 2 H(+) = thiamine phosphate + CO2 + diphosphate</text>
        <dbReference type="Rhea" id="RHEA:47844"/>
        <dbReference type="ChEBI" id="CHEBI:15378"/>
        <dbReference type="ChEBI" id="CHEBI:16526"/>
        <dbReference type="ChEBI" id="CHEBI:33019"/>
        <dbReference type="ChEBI" id="CHEBI:37575"/>
        <dbReference type="ChEBI" id="CHEBI:57841"/>
        <dbReference type="ChEBI" id="CHEBI:62899"/>
        <dbReference type="EC" id="2.5.1.3"/>
    </reaction>
</comment>
<comment type="catalytic activity">
    <reaction evidence="1">
        <text>2-(2-carboxy-4-methylthiazol-5-yl)ethyl phosphate + 4-amino-2-methyl-5-(diphosphooxymethyl)pyrimidine + 2 H(+) = thiamine phosphate + CO2 + diphosphate</text>
        <dbReference type="Rhea" id="RHEA:47848"/>
        <dbReference type="ChEBI" id="CHEBI:15378"/>
        <dbReference type="ChEBI" id="CHEBI:16526"/>
        <dbReference type="ChEBI" id="CHEBI:33019"/>
        <dbReference type="ChEBI" id="CHEBI:37575"/>
        <dbReference type="ChEBI" id="CHEBI:57841"/>
        <dbReference type="ChEBI" id="CHEBI:62890"/>
        <dbReference type="EC" id="2.5.1.3"/>
    </reaction>
</comment>
<comment type="catalytic activity">
    <reaction evidence="1">
        <text>4-methyl-5-(2-phosphooxyethyl)-thiazole + 4-amino-2-methyl-5-(diphosphooxymethyl)pyrimidine + H(+) = thiamine phosphate + diphosphate</text>
        <dbReference type="Rhea" id="RHEA:22328"/>
        <dbReference type="ChEBI" id="CHEBI:15378"/>
        <dbReference type="ChEBI" id="CHEBI:33019"/>
        <dbReference type="ChEBI" id="CHEBI:37575"/>
        <dbReference type="ChEBI" id="CHEBI:57841"/>
        <dbReference type="ChEBI" id="CHEBI:58296"/>
        <dbReference type="EC" id="2.5.1.3"/>
    </reaction>
</comment>
<comment type="cofactor">
    <cofactor evidence="1">
        <name>Mg(2+)</name>
        <dbReference type="ChEBI" id="CHEBI:18420"/>
    </cofactor>
    <text evidence="1">Binds 1 Mg(2+) ion per subunit.</text>
</comment>
<comment type="pathway">
    <text evidence="1">Cofactor biosynthesis; thiamine diphosphate biosynthesis; thiamine phosphate from 4-amino-2-methyl-5-diphosphomethylpyrimidine and 4-methyl-5-(2-phosphoethyl)-thiazole: step 1/1.</text>
</comment>
<comment type="similarity">
    <text evidence="1">Belongs to the thiamine-phosphate synthase family.</text>
</comment>
<dbReference type="EC" id="2.5.1.3" evidence="1"/>
<dbReference type="EMBL" id="AL111168">
    <property type="protein sequence ID" value="CAL35198.1"/>
    <property type="molecule type" value="Genomic_DNA"/>
</dbReference>
<dbReference type="PIR" id="D81311">
    <property type="entry name" value="D81311"/>
</dbReference>
<dbReference type="RefSeq" id="WP_002858441.1">
    <property type="nucleotide sequence ID" value="NZ_SZUC01000001.1"/>
</dbReference>
<dbReference type="RefSeq" id="YP_002344474.1">
    <property type="nucleotide sequence ID" value="NC_002163.1"/>
</dbReference>
<dbReference type="SMR" id="Q9PNL3"/>
<dbReference type="IntAct" id="Q9PNL3">
    <property type="interactions" value="40"/>
</dbReference>
<dbReference type="STRING" id="192222.Cj1081c"/>
<dbReference type="PaxDb" id="192222-Cj1081c"/>
<dbReference type="EnsemblBacteria" id="CAL35198">
    <property type="protein sequence ID" value="CAL35198"/>
    <property type="gene ID" value="Cj1081c"/>
</dbReference>
<dbReference type="GeneID" id="905372"/>
<dbReference type="KEGG" id="cje:Cj1081c"/>
<dbReference type="PATRIC" id="fig|192222.6.peg.1063"/>
<dbReference type="eggNOG" id="COG0352">
    <property type="taxonomic scope" value="Bacteria"/>
</dbReference>
<dbReference type="HOGENOM" id="CLU_018272_3_2_7"/>
<dbReference type="OrthoDB" id="9810880at2"/>
<dbReference type="UniPathway" id="UPA00060">
    <property type="reaction ID" value="UER00141"/>
</dbReference>
<dbReference type="Proteomes" id="UP000000799">
    <property type="component" value="Chromosome"/>
</dbReference>
<dbReference type="GO" id="GO:0005737">
    <property type="term" value="C:cytoplasm"/>
    <property type="evidence" value="ECO:0007669"/>
    <property type="project" value="TreeGrafter"/>
</dbReference>
<dbReference type="GO" id="GO:0000287">
    <property type="term" value="F:magnesium ion binding"/>
    <property type="evidence" value="ECO:0007669"/>
    <property type="project" value="UniProtKB-UniRule"/>
</dbReference>
<dbReference type="GO" id="GO:0004789">
    <property type="term" value="F:thiamine-phosphate diphosphorylase activity"/>
    <property type="evidence" value="ECO:0007669"/>
    <property type="project" value="UniProtKB-UniRule"/>
</dbReference>
<dbReference type="GO" id="GO:0009228">
    <property type="term" value="P:thiamine biosynthetic process"/>
    <property type="evidence" value="ECO:0007669"/>
    <property type="project" value="UniProtKB-KW"/>
</dbReference>
<dbReference type="GO" id="GO:0009229">
    <property type="term" value="P:thiamine diphosphate biosynthetic process"/>
    <property type="evidence" value="ECO:0007669"/>
    <property type="project" value="UniProtKB-UniRule"/>
</dbReference>
<dbReference type="CDD" id="cd00564">
    <property type="entry name" value="TMP_TenI"/>
    <property type="match status" value="1"/>
</dbReference>
<dbReference type="FunFam" id="3.20.20.70:FF:000096">
    <property type="entry name" value="Thiamine-phosphate synthase"/>
    <property type="match status" value="1"/>
</dbReference>
<dbReference type="Gene3D" id="3.20.20.70">
    <property type="entry name" value="Aldolase class I"/>
    <property type="match status" value="1"/>
</dbReference>
<dbReference type="HAMAP" id="MF_00097">
    <property type="entry name" value="TMP_synthase"/>
    <property type="match status" value="1"/>
</dbReference>
<dbReference type="InterPro" id="IPR013785">
    <property type="entry name" value="Aldolase_TIM"/>
</dbReference>
<dbReference type="InterPro" id="IPR036206">
    <property type="entry name" value="ThiamineP_synth_sf"/>
</dbReference>
<dbReference type="InterPro" id="IPR022998">
    <property type="entry name" value="ThiamineP_synth_TenI"/>
</dbReference>
<dbReference type="InterPro" id="IPR034291">
    <property type="entry name" value="TMP_synthase"/>
</dbReference>
<dbReference type="NCBIfam" id="TIGR00693">
    <property type="entry name" value="thiE"/>
    <property type="match status" value="1"/>
</dbReference>
<dbReference type="PANTHER" id="PTHR20857:SF23">
    <property type="entry name" value="THIAMINE BIOSYNTHETIC BIFUNCTIONAL ENZYME"/>
    <property type="match status" value="1"/>
</dbReference>
<dbReference type="PANTHER" id="PTHR20857">
    <property type="entry name" value="THIAMINE-PHOSPHATE PYROPHOSPHORYLASE"/>
    <property type="match status" value="1"/>
</dbReference>
<dbReference type="Pfam" id="PF02581">
    <property type="entry name" value="TMP-TENI"/>
    <property type="match status" value="1"/>
</dbReference>
<dbReference type="SUPFAM" id="SSF51391">
    <property type="entry name" value="Thiamin phosphate synthase"/>
    <property type="match status" value="1"/>
</dbReference>